<accession>A1CKN7</accession>
<evidence type="ECO:0000255" key="1">
    <source>
        <dbReference type="HAMAP-Rule" id="MF_03004"/>
    </source>
</evidence>
<evidence type="ECO:0000255" key="2">
    <source>
        <dbReference type="PROSITE-ProRule" id="PRU01185"/>
    </source>
</evidence>
<name>EIF3E_ASPCL</name>
<comment type="function">
    <text evidence="1">Component of the eukaryotic translation initiation factor 3 (eIF-3) complex, which is involved in protein synthesis of a specialized repertoire of mRNAs and, together with other initiation factors, stimulates binding of mRNA and methionyl-tRNAi to the 40S ribosome. The eIF-3 complex specifically targets and initiates translation of a subset of mRNAs involved in cell proliferation.</text>
</comment>
<comment type="subunit">
    <text evidence="1">Component of the eukaryotic translation initiation factor 3 (eIF-3) complex.</text>
</comment>
<comment type="subcellular location">
    <subcellularLocation>
        <location evidence="1">Cytoplasm</location>
    </subcellularLocation>
</comment>
<comment type="similarity">
    <text evidence="1">Belongs to the eIF-3 subunit E family.</text>
</comment>
<gene>
    <name type="primary">int6</name>
    <name type="ORF">ACLA_039260</name>
</gene>
<protein>
    <recommendedName>
        <fullName evidence="1">Eukaryotic translation initiation factor 3 subunit E</fullName>
        <shortName evidence="1">eIF3e</shortName>
    </recommendedName>
</protein>
<dbReference type="EMBL" id="DS027056">
    <property type="protein sequence ID" value="EAW09711.1"/>
    <property type="molecule type" value="Genomic_DNA"/>
</dbReference>
<dbReference type="RefSeq" id="XP_001271137.1">
    <property type="nucleotide sequence ID" value="XM_001271136.1"/>
</dbReference>
<dbReference type="SMR" id="A1CKN7"/>
<dbReference type="STRING" id="344612.A1CKN7"/>
<dbReference type="EnsemblFungi" id="EAW09711">
    <property type="protein sequence ID" value="EAW09711"/>
    <property type="gene ID" value="ACLA_039260"/>
</dbReference>
<dbReference type="GeneID" id="4702795"/>
<dbReference type="KEGG" id="act:ACLA_039260"/>
<dbReference type="VEuPathDB" id="FungiDB:ACLA_039260"/>
<dbReference type="eggNOG" id="KOG2758">
    <property type="taxonomic scope" value="Eukaryota"/>
</dbReference>
<dbReference type="HOGENOM" id="CLU_031132_0_0_1"/>
<dbReference type="OMA" id="NCPWILR"/>
<dbReference type="OrthoDB" id="417252at2759"/>
<dbReference type="Proteomes" id="UP000006701">
    <property type="component" value="Unassembled WGS sequence"/>
</dbReference>
<dbReference type="GO" id="GO:0016282">
    <property type="term" value="C:eukaryotic 43S preinitiation complex"/>
    <property type="evidence" value="ECO:0007669"/>
    <property type="project" value="UniProtKB-UniRule"/>
</dbReference>
<dbReference type="GO" id="GO:0033290">
    <property type="term" value="C:eukaryotic 48S preinitiation complex"/>
    <property type="evidence" value="ECO:0007669"/>
    <property type="project" value="UniProtKB-UniRule"/>
</dbReference>
<dbReference type="GO" id="GO:0071540">
    <property type="term" value="C:eukaryotic translation initiation factor 3 complex, eIF3e"/>
    <property type="evidence" value="ECO:0007669"/>
    <property type="project" value="UniProtKB-UniRule"/>
</dbReference>
<dbReference type="GO" id="GO:0003743">
    <property type="term" value="F:translation initiation factor activity"/>
    <property type="evidence" value="ECO:0007669"/>
    <property type="project" value="UniProtKB-UniRule"/>
</dbReference>
<dbReference type="GO" id="GO:0001732">
    <property type="term" value="P:formation of cytoplasmic translation initiation complex"/>
    <property type="evidence" value="ECO:0007669"/>
    <property type="project" value="UniProtKB-UniRule"/>
</dbReference>
<dbReference type="CDD" id="cd21378">
    <property type="entry name" value="eIF3E"/>
    <property type="match status" value="1"/>
</dbReference>
<dbReference type="HAMAP" id="MF_03004">
    <property type="entry name" value="eIF3e"/>
    <property type="match status" value="1"/>
</dbReference>
<dbReference type="InterPro" id="IPR016650">
    <property type="entry name" value="eIF3e"/>
</dbReference>
<dbReference type="InterPro" id="IPR019010">
    <property type="entry name" value="eIF3e_N"/>
</dbReference>
<dbReference type="InterPro" id="IPR000717">
    <property type="entry name" value="PCI_dom"/>
</dbReference>
<dbReference type="InterPro" id="IPR036390">
    <property type="entry name" value="WH_DNA-bd_sf"/>
</dbReference>
<dbReference type="PANTHER" id="PTHR10317">
    <property type="entry name" value="EUKARYOTIC TRANSLATION INITIATION FACTOR 3 SUBUNIT E"/>
    <property type="match status" value="1"/>
</dbReference>
<dbReference type="Pfam" id="PF09440">
    <property type="entry name" value="eIF3_N"/>
    <property type="match status" value="1"/>
</dbReference>
<dbReference type="Pfam" id="PF21357">
    <property type="entry name" value="EIF3E_C"/>
    <property type="match status" value="1"/>
</dbReference>
<dbReference type="Pfam" id="PF01399">
    <property type="entry name" value="PCI"/>
    <property type="match status" value="1"/>
</dbReference>
<dbReference type="PIRSF" id="PIRSF016255">
    <property type="entry name" value="eIF3e_su6"/>
    <property type="match status" value="1"/>
</dbReference>
<dbReference type="SMART" id="SM01186">
    <property type="entry name" value="eIF3_N"/>
    <property type="match status" value="1"/>
</dbReference>
<dbReference type="SMART" id="SM00088">
    <property type="entry name" value="PINT"/>
    <property type="match status" value="1"/>
</dbReference>
<dbReference type="SUPFAM" id="SSF46785">
    <property type="entry name" value="Winged helix' DNA-binding domain"/>
    <property type="match status" value="1"/>
</dbReference>
<dbReference type="PROSITE" id="PS50250">
    <property type="entry name" value="PCI"/>
    <property type="match status" value="1"/>
</dbReference>
<organism>
    <name type="scientific">Aspergillus clavatus (strain ATCC 1007 / CBS 513.65 / DSM 816 / NCTC 3887 / NRRL 1 / QM 1276 / 107)</name>
    <dbReference type="NCBI Taxonomy" id="344612"/>
    <lineage>
        <taxon>Eukaryota</taxon>
        <taxon>Fungi</taxon>
        <taxon>Dikarya</taxon>
        <taxon>Ascomycota</taxon>
        <taxon>Pezizomycotina</taxon>
        <taxon>Eurotiomycetes</taxon>
        <taxon>Eurotiomycetidae</taxon>
        <taxon>Eurotiales</taxon>
        <taxon>Aspergillaceae</taxon>
        <taxon>Aspergillus</taxon>
        <taxon>Aspergillus subgen. Fumigati</taxon>
    </lineage>
</organism>
<sequence>MADNAPPTAETLLSGAAAHPQTAEEIANQYNLLPKLIPYLDRHLVFPLLEFSSGQDDEKEVVRAKYELLKHTNMTDYVANLWKEIHNSDTIPDEFVKKREEVLSKLQEYEEESAKITQLLQDESVVANLRSDKAANLKFLEEQHGVTVEMVNSLYEYGRFQYSCGSYGNAAELLYQFRVLSTDNDKVASATWGKLASEILTTSWDAAMEEVLKVKDSIETRLFNNPLGQLQNRSWLIHWALFPFFNHDPARDALTELFFSPAYINTIQTNCPWILRYLAAAVITNRNRAHKSSGSYQKQLKDLIRVVRQEGYEYSDPITDFVKALYIDFDFEEAQKKLGEAEDVLRSDFFLVSAADAFVEAARHLISESYCKIHQRIDIKDLSTRLGLNQDEGEKWIVNLIRDTRVDAKIDYKEGTVIMNHPPQSVYQQVIEKTKGAFFRTQVLRFVFPI</sequence>
<feature type="chain" id="PRO_0000365978" description="Eukaryotic translation initiation factor 3 subunit E">
    <location>
        <begin position="1"/>
        <end position="450"/>
    </location>
</feature>
<feature type="domain" description="PCI" evidence="2">
    <location>
        <begin position="255"/>
        <end position="424"/>
    </location>
</feature>
<keyword id="KW-0963">Cytoplasm</keyword>
<keyword id="KW-0396">Initiation factor</keyword>
<keyword id="KW-0648">Protein biosynthesis</keyword>
<keyword id="KW-1185">Reference proteome</keyword>
<reference key="1">
    <citation type="journal article" date="2008" name="PLoS Genet.">
        <title>Genomic islands in the pathogenic filamentous fungus Aspergillus fumigatus.</title>
        <authorList>
            <person name="Fedorova N.D."/>
            <person name="Khaldi N."/>
            <person name="Joardar V.S."/>
            <person name="Maiti R."/>
            <person name="Amedeo P."/>
            <person name="Anderson M.J."/>
            <person name="Crabtree J."/>
            <person name="Silva J.C."/>
            <person name="Badger J.H."/>
            <person name="Albarraq A."/>
            <person name="Angiuoli S."/>
            <person name="Bussey H."/>
            <person name="Bowyer P."/>
            <person name="Cotty P.J."/>
            <person name="Dyer P.S."/>
            <person name="Egan A."/>
            <person name="Galens K."/>
            <person name="Fraser-Liggett C.M."/>
            <person name="Haas B.J."/>
            <person name="Inman J.M."/>
            <person name="Kent R."/>
            <person name="Lemieux S."/>
            <person name="Malavazi I."/>
            <person name="Orvis J."/>
            <person name="Roemer T."/>
            <person name="Ronning C.M."/>
            <person name="Sundaram J.P."/>
            <person name="Sutton G."/>
            <person name="Turner G."/>
            <person name="Venter J.C."/>
            <person name="White O.R."/>
            <person name="Whitty B.R."/>
            <person name="Youngman P."/>
            <person name="Wolfe K.H."/>
            <person name="Goldman G.H."/>
            <person name="Wortman J.R."/>
            <person name="Jiang B."/>
            <person name="Denning D.W."/>
            <person name="Nierman W.C."/>
        </authorList>
    </citation>
    <scope>NUCLEOTIDE SEQUENCE [LARGE SCALE GENOMIC DNA]</scope>
    <source>
        <strain>ATCC 1007 / CBS 513.65 / DSM 816 / NCTC 3887 / NRRL 1 / QM 1276 / 107</strain>
    </source>
</reference>
<proteinExistence type="inferred from homology"/>